<accession>Q55053</accession>
<accession>F8HGK2</accession>
<dbReference type="EC" id="3.5.1.5" evidence="1"/>
<dbReference type="EMBL" id="U35248">
    <property type="protein sequence ID" value="AAC43562.1"/>
    <property type="molecule type" value="Genomic_DNA"/>
</dbReference>
<dbReference type="EMBL" id="CP002888">
    <property type="protein sequence ID" value="AEJ54138.1"/>
    <property type="status" value="ALT_INIT"/>
    <property type="molecule type" value="Genomic_DNA"/>
</dbReference>
<dbReference type="RefSeq" id="WP_002886558.1">
    <property type="nucleotide sequence ID" value="NC_017594.1"/>
</dbReference>
<dbReference type="SMR" id="Q55053"/>
<dbReference type="KEGG" id="stf:Ssal_01902"/>
<dbReference type="PATRIC" id="fig|1046629.4.peg.1688"/>
<dbReference type="eggNOG" id="COG0831">
    <property type="taxonomic scope" value="Bacteria"/>
</dbReference>
<dbReference type="BioCyc" id="MetaCyc:MONOMER-184"/>
<dbReference type="SABIO-RK" id="Q55053"/>
<dbReference type="UniPathway" id="UPA00258">
    <property type="reaction ID" value="UER00370"/>
</dbReference>
<dbReference type="GO" id="GO:0005737">
    <property type="term" value="C:cytoplasm"/>
    <property type="evidence" value="ECO:0007669"/>
    <property type="project" value="UniProtKB-SubCell"/>
</dbReference>
<dbReference type="GO" id="GO:0016151">
    <property type="term" value="F:nickel cation binding"/>
    <property type="evidence" value="ECO:0007669"/>
    <property type="project" value="InterPro"/>
</dbReference>
<dbReference type="GO" id="GO:0009039">
    <property type="term" value="F:urease activity"/>
    <property type="evidence" value="ECO:0007669"/>
    <property type="project" value="UniProtKB-UniRule"/>
</dbReference>
<dbReference type="GO" id="GO:0043419">
    <property type="term" value="P:urea catabolic process"/>
    <property type="evidence" value="ECO:0007669"/>
    <property type="project" value="UniProtKB-UniRule"/>
</dbReference>
<dbReference type="CDD" id="cd00390">
    <property type="entry name" value="Urease_gamma"/>
    <property type="match status" value="1"/>
</dbReference>
<dbReference type="Gene3D" id="3.30.280.10">
    <property type="entry name" value="Urease, gamma-like subunit"/>
    <property type="match status" value="1"/>
</dbReference>
<dbReference type="HAMAP" id="MF_00739">
    <property type="entry name" value="Urease_gamma"/>
    <property type="match status" value="1"/>
</dbReference>
<dbReference type="InterPro" id="IPR012010">
    <property type="entry name" value="Urease_gamma"/>
</dbReference>
<dbReference type="InterPro" id="IPR002026">
    <property type="entry name" value="Urease_gamma/gamma-beta_su"/>
</dbReference>
<dbReference type="InterPro" id="IPR036463">
    <property type="entry name" value="Urease_gamma_sf"/>
</dbReference>
<dbReference type="InterPro" id="IPR050069">
    <property type="entry name" value="Urease_subunit"/>
</dbReference>
<dbReference type="NCBIfam" id="NF009712">
    <property type="entry name" value="PRK13241.1"/>
    <property type="match status" value="1"/>
</dbReference>
<dbReference type="NCBIfam" id="TIGR00193">
    <property type="entry name" value="urease_gam"/>
    <property type="match status" value="1"/>
</dbReference>
<dbReference type="PANTHER" id="PTHR33569">
    <property type="entry name" value="UREASE"/>
    <property type="match status" value="1"/>
</dbReference>
<dbReference type="PANTHER" id="PTHR33569:SF1">
    <property type="entry name" value="UREASE"/>
    <property type="match status" value="1"/>
</dbReference>
<dbReference type="Pfam" id="PF00547">
    <property type="entry name" value="Urease_gamma"/>
    <property type="match status" value="1"/>
</dbReference>
<dbReference type="PIRSF" id="PIRSF001223">
    <property type="entry name" value="Urease_gamma"/>
    <property type="match status" value="1"/>
</dbReference>
<dbReference type="SUPFAM" id="SSF54111">
    <property type="entry name" value="Urease, gamma-subunit"/>
    <property type="match status" value="1"/>
</dbReference>
<protein>
    <recommendedName>
        <fullName evidence="1">Urease subunit gamma</fullName>
        <ecNumber evidence="1">3.5.1.5</ecNumber>
    </recommendedName>
    <alternativeName>
        <fullName evidence="1">Urea amidohydrolase subunit gamma</fullName>
    </alternativeName>
</protein>
<keyword id="KW-0963">Cytoplasm</keyword>
<keyword id="KW-0378">Hydrolase</keyword>
<reference key="1">
    <citation type="journal article" date="1996" name="Infect. Immun.">
        <title>Streptococcus salivarius urease: genetic and biochemical characterization and expression in a dental plaque streptococcus.</title>
        <authorList>
            <person name="Chen Y.-Y.M."/>
            <person name="Clancy K.A."/>
            <person name="Burne R.A."/>
        </authorList>
    </citation>
    <scope>NUCLEOTIDE SEQUENCE [GENOMIC DNA]</scope>
    <scope>BIOPHYSICOCHEMICAL PROPERTIES</scope>
    <source>
        <strain>57.I</strain>
    </source>
</reference>
<reference key="2">
    <citation type="journal article" date="2011" name="J. Bacteriol.">
        <title>Complete genome sequence of the ureolytic Streptococcus salivarius strain 57.I.</title>
        <authorList>
            <person name="Geng J."/>
            <person name="Huang S.C."/>
            <person name="Li S."/>
            <person name="Hu S."/>
            <person name="Chen Y.Y."/>
        </authorList>
    </citation>
    <scope>NUCLEOTIDE SEQUENCE [LARGE SCALE GENOMIC DNA]</scope>
    <source>
        <strain>57.I</strain>
    </source>
</reference>
<reference key="3">
    <citation type="journal article" date="1996" name="FEMS Microbiol. Lett.">
        <title>Analysis of Streptococcus salivarius urease expression using continuous chemostat culture.</title>
        <authorList>
            <person name="Chen Y.-Y.M."/>
            <person name="Burne R.A."/>
        </authorList>
    </citation>
    <scope>INDUCTION</scope>
    <source>
        <strain>57.I</strain>
    </source>
</reference>
<reference key="4">
    <citation type="journal article" date="1998" name="J. Bacteriol.">
        <title>Transcriptional regulation of the Streptococcus salivarius 57.I urease operon.</title>
        <authorList>
            <person name="Chen Y.-Y.M."/>
            <person name="Weaver C.A."/>
            <person name="Mendelsohn D.R."/>
            <person name="Burne R.A."/>
        </authorList>
    </citation>
    <scope>INDUCTION</scope>
    <source>
        <strain>57.I</strain>
    </source>
</reference>
<reference key="5">
    <citation type="journal article" date="2000" name="J. Bacteriol.">
        <title>Dual functions of Streptococcus salivarius urease.</title>
        <authorList>
            <person name="Chen Y.-Y.M."/>
            <person name="Weaver C.A."/>
            <person name="Burne R.A."/>
        </authorList>
    </citation>
    <scope>FUNCTION</scope>
    <source>
        <strain>57.I</strain>
    </source>
</reference>
<comment type="function">
    <text evidence="2">Ureolysis may allow urea to be employed as a nitrogen source for growth and produces ammonia which may protect from killing at low pH.</text>
</comment>
<comment type="catalytic activity">
    <reaction evidence="1">
        <text>urea + 2 H2O + H(+) = hydrogencarbonate + 2 NH4(+)</text>
        <dbReference type="Rhea" id="RHEA:20557"/>
        <dbReference type="ChEBI" id="CHEBI:15377"/>
        <dbReference type="ChEBI" id="CHEBI:15378"/>
        <dbReference type="ChEBI" id="CHEBI:16199"/>
        <dbReference type="ChEBI" id="CHEBI:17544"/>
        <dbReference type="ChEBI" id="CHEBI:28938"/>
        <dbReference type="EC" id="3.5.1.5"/>
    </reaction>
</comment>
<comment type="biophysicochemical properties">
    <kinetics>
        <KM evidence="3">3.7 mM for urea (at pH 7.0 and 37 degrees Celsius)</KM>
        <text>Urea concentrations in the oral cavity of humans normally range from 3 mM to 10 mM.</text>
    </kinetics>
    <phDependence>
        <text evidence="3">Optimum pH is 7.0.</text>
    </phDependence>
    <temperatureDependence>
        <text evidence="3">Optimum temperature is 60 degrees Celsius.</text>
    </temperatureDependence>
</comment>
<comment type="pathway">
    <text evidence="1">Nitrogen metabolism; urea degradation; CO(2) and NH(3) from urea (urease route): step 1/1.</text>
</comment>
<comment type="subunit">
    <text evidence="1">Heterotrimer of UreA (gamma), UreB (beta) and UreC (alpha) subunits. Three heterotrimers associate to form the active enzyme.</text>
</comment>
<comment type="subcellular location">
    <subcellularLocation>
        <location evidence="1">Cytoplasm</location>
    </subcellularLocation>
</comment>
<comment type="induction">
    <text evidence="4 5">By low pH and excess glucose.</text>
</comment>
<comment type="similarity">
    <text evidence="1">Belongs to the urease gamma subunit family.</text>
</comment>
<comment type="sequence caution" evidence="6">
    <conflict type="erroneous initiation">
        <sequence resource="EMBL-CDS" id="AEJ54138"/>
    </conflict>
    <text>Truncated N-terminus.</text>
</comment>
<organism>
    <name type="scientific">Streptococcus salivarius (strain 57.I)</name>
    <dbReference type="NCBI Taxonomy" id="1046629"/>
    <lineage>
        <taxon>Bacteria</taxon>
        <taxon>Bacillati</taxon>
        <taxon>Bacillota</taxon>
        <taxon>Bacilli</taxon>
        <taxon>Lactobacillales</taxon>
        <taxon>Streptococcaceae</taxon>
        <taxon>Streptococcus</taxon>
    </lineage>
</organism>
<evidence type="ECO:0000255" key="1">
    <source>
        <dbReference type="HAMAP-Rule" id="MF_00739"/>
    </source>
</evidence>
<evidence type="ECO:0000269" key="2">
    <source>
    </source>
</evidence>
<evidence type="ECO:0000269" key="3">
    <source>
    </source>
</evidence>
<evidence type="ECO:0000269" key="4">
    <source>
    </source>
</evidence>
<evidence type="ECO:0000269" key="5">
    <source>
    </source>
</evidence>
<evidence type="ECO:0000305" key="6"/>
<proteinExistence type="evidence at protein level"/>
<feature type="chain" id="PRO_0000098050" description="Urease subunit gamma">
    <location>
        <begin position="1"/>
        <end position="100"/>
    </location>
</feature>
<feature type="sequence conflict" description="In Ref. 1; AAC43562." evidence="6" ref="1">
    <original>E</original>
    <variation>K</variation>
    <location>
        <position position="9"/>
    </location>
</feature>
<sequence length="100" mass="11299">MQLTMREQEKMMISLAAMIAQRRKDKGIKLNHPEAVALITDYVLEGAREGKTVAQLMDEARNLLTREDVMEGIAEMIPMIQVEATFTDSTKLVTVHDPIQ</sequence>
<name>URE3_STRE5</name>
<gene>
    <name evidence="1" type="primary">ureA</name>
    <name type="ordered locus">Ssal_01902</name>
</gene>